<reference key="1">
    <citation type="journal article" date="1999" name="Virology">
        <title>The complete genome sequence of PM2, the first lipid-containing bacterial virus to be isolated.</title>
        <authorList>
            <person name="Maennistoe R.H."/>
            <person name="Kivelae H.M."/>
            <person name="Paulin L."/>
            <person name="Bamford D.H."/>
            <person name="Bamford J.K."/>
        </authorList>
    </citation>
    <scope>NUCLEOTIDE SEQUENCE [GENOMIC DNA]</scope>
</reference>
<feature type="chain" id="PRO_0000339907" description="Probable replication protein P12">
    <location>
        <begin position="1"/>
        <end position="634"/>
    </location>
</feature>
<feature type="active site" description="O-(5'-phospho-DNA)-tyrosine intermediate" evidence="1">
    <location>
        <position position="410"/>
    </location>
</feature>
<feature type="active site" description="O-(5'-phospho-DNA)-tyrosine intermediate" evidence="1">
    <location>
        <position position="414"/>
    </location>
</feature>
<sequence length="634" mass="72094">MRSIAIGHEPIKGGLKPIELIRPVPFCSPAFGFDKAAEYAKEQLKKIPTTYLRRHAAKLYAARFNSTTAKNPEKSANIFMRELVKRVDQIVTRSPLNITELQRDKRRKDKAKQLALICQQMGIVDFDKSMTLEQATALVISKYQKLAEFTINQIDTAPAYSTYEAFMKKGGNPEILADKLEIAIRRMTCDKWWQRKLNRARDMTLEHLNITLGLVNKKKSPYASLQAVNEFKYAKKSQQKWLDSMQLESDDGETTLDLAEVFKGSVSNPEIRRVELMVRIRGYEEYAQEQGMKAVFYTITAPSKYHANSKKYNNATPKETQAFLVNQWAKARAELNKIDVPVFGVRVVEPHHDATPHWHMLLFMLPEHEQVTTKALRGYAMQIDGDEKGAEQARFTAENIDPSKGSAVGYIAKYISKNINANHIEGEKDNETGGEFNNENGLVLNVGAWASRWRIRQFQFVGGASVGVWREIRRAKPEMLDKSTDVLREIFSAADNSQFAQFINLMGGAFAKRSERPIQISRVADGLNEYGEEKKRVVGLESCSNVLKTRLMRFALKKRSDSDAPWSTENNCNHPANDWQIGAGDRLNPIAFIPKEIRNNVLRGATYYEVDEQLKTITEFKVKNNQLTQESIGL</sequence>
<organismHost>
    <name type="scientific">Pseudoalteromonas espejiana</name>
    <dbReference type="NCBI Taxonomy" id="28107"/>
</organismHost>
<accession>Q9XJS3</accession>
<evidence type="ECO:0000250" key="1"/>
<evidence type="ECO:0000305" key="2"/>
<proteinExistence type="inferred from homology"/>
<comment type="function">
    <text>Probable endonuclease which induces a single-strand cut and initiates DNA replication.</text>
</comment>
<comment type="similarity">
    <text evidence="2">Belongs to the phage GPA family.</text>
</comment>
<protein>
    <recommendedName>
        <fullName>Probable replication protein P12</fullName>
        <ecNumber>3.1.-.-</ecNumber>
    </recommendedName>
    <alternativeName>
        <fullName>Protein XII</fullName>
    </alternativeName>
</protein>
<gene>
    <name type="primary">XII</name>
</gene>
<organism>
    <name type="scientific">Pseudoalteromonas phage PM2</name>
    <name type="common">Bacteriophage PM2</name>
    <dbReference type="NCBI Taxonomy" id="2905728"/>
    <lineage>
        <taxon>Viruses</taxon>
        <taxon>Varidnaviria</taxon>
        <taxon>Bamfordvirae</taxon>
        <taxon>Preplasmiviricota</taxon>
        <taxon>Tectiliviricetes</taxon>
        <taxon>Vinavirales</taxon>
        <taxon>Corticoviridae</taxon>
        <taxon>Corticovirus</taxon>
        <taxon>Corticovirus PM2</taxon>
    </lineage>
</organism>
<dbReference type="EC" id="3.1.-.-"/>
<dbReference type="EMBL" id="AF155037">
    <property type="protein sequence ID" value="AAD43543.1"/>
    <property type="molecule type" value="Genomic_DNA"/>
</dbReference>
<dbReference type="RefSeq" id="NP_049896.1">
    <property type="nucleotide sequence ID" value="NC_000867.1"/>
</dbReference>
<dbReference type="KEGG" id="vg:1262037"/>
<dbReference type="Proteomes" id="UP000002136">
    <property type="component" value="Genome"/>
</dbReference>
<dbReference type="GO" id="GO:0004519">
    <property type="term" value="F:endonuclease activity"/>
    <property type="evidence" value="ECO:0007669"/>
    <property type="project" value="UniProtKB-KW"/>
</dbReference>
<dbReference type="GO" id="GO:0006260">
    <property type="term" value="P:DNA replication"/>
    <property type="evidence" value="ECO:0007669"/>
    <property type="project" value="UniProtKB-KW"/>
</dbReference>
<dbReference type="GO" id="GO:0039693">
    <property type="term" value="P:viral DNA genome replication"/>
    <property type="evidence" value="ECO:0007669"/>
    <property type="project" value="UniProtKB-KW"/>
</dbReference>
<dbReference type="InterPro" id="IPR008766">
    <property type="entry name" value="Replication_gene_A-like"/>
</dbReference>
<dbReference type="Pfam" id="PF05840">
    <property type="entry name" value="Phage_GPA"/>
    <property type="match status" value="1"/>
</dbReference>
<name>P12_BPPM2</name>
<keyword id="KW-0235">DNA replication</keyword>
<keyword id="KW-0255">Endonuclease</keyword>
<keyword id="KW-0378">Hydrolase</keyword>
<keyword id="KW-0540">Nuclease</keyword>
<keyword id="KW-1185">Reference proteome</keyword>
<keyword id="KW-1194">Viral DNA replication</keyword>